<gene>
    <name type="ordered locus">UU144</name>
</gene>
<feature type="chain" id="PRO_0000220804" description="Uncharacterized protein UU144">
    <location>
        <begin position="1"/>
        <end position="243"/>
    </location>
</feature>
<proteinExistence type="predicted"/>
<keyword id="KW-1185">Reference proteome</keyword>
<reference key="1">
    <citation type="journal article" date="2000" name="Nature">
        <title>The complete sequence of the mucosal pathogen Ureaplasma urealyticum.</title>
        <authorList>
            <person name="Glass J.I."/>
            <person name="Lefkowitz E.J."/>
            <person name="Glass J.S."/>
            <person name="Heiner C.R."/>
            <person name="Chen E.Y."/>
            <person name="Cassell G.H."/>
        </authorList>
    </citation>
    <scope>NUCLEOTIDE SEQUENCE [LARGE SCALE GENOMIC DNA]</scope>
    <source>
        <strain>ATCC 700970</strain>
    </source>
</reference>
<dbReference type="EMBL" id="AF222894">
    <property type="protein sequence ID" value="AAF30550.1"/>
    <property type="molecule type" value="Genomic_DNA"/>
</dbReference>
<dbReference type="SMR" id="Q9PR00"/>
<dbReference type="STRING" id="273119.UU144"/>
<dbReference type="EnsemblBacteria" id="AAF30550">
    <property type="protein sequence ID" value="AAF30550"/>
    <property type="gene ID" value="UU144"/>
</dbReference>
<dbReference type="KEGG" id="uur:UU144"/>
<dbReference type="PATRIC" id="fig|273119.6.peg.150"/>
<dbReference type="HOGENOM" id="CLU_1234565_0_0_14"/>
<dbReference type="OrthoDB" id="9950542at2"/>
<dbReference type="Proteomes" id="UP000000423">
    <property type="component" value="Chromosome"/>
</dbReference>
<name>Y144_UREPA</name>
<sequence length="243" mass="27866">MSLHKTIYIKFNNRDYDVKLTNVKIANIALNNDNVNNIEQNHISFRHLSTNDIKNSNDKVEAKFSIGLGFDISEKLKNIAFKKLDTNTNKLIDISDPTILRLTFYEYNKDQKVENNLAAPTDKTKISVVEIKKSQLMNSSIVSFVKKLNKNAKYHMANIAFNQQLLPYLNKQFNVNADFPIDLEQNPIDFNDNKQANDEKIKKTKESAIKVATAIAKQIVGIDYKGRDIIKNFIELDNVVNKK</sequence>
<accession>Q9PR00</accession>
<protein>
    <recommendedName>
        <fullName>Uncharacterized protein UU144</fullName>
    </recommendedName>
</protein>
<organism>
    <name type="scientific">Ureaplasma parvum serovar 3 (strain ATCC 700970)</name>
    <dbReference type="NCBI Taxonomy" id="273119"/>
    <lineage>
        <taxon>Bacteria</taxon>
        <taxon>Bacillati</taxon>
        <taxon>Mycoplasmatota</taxon>
        <taxon>Mycoplasmoidales</taxon>
        <taxon>Mycoplasmoidaceae</taxon>
        <taxon>Ureaplasma</taxon>
    </lineage>
</organism>